<organism>
    <name type="scientific">Pseudarthrobacter chlorophenolicus (strain ATCC 700700 / DSM 12829 / CIP 107037 / JCM 12360 / KCTC 9906 / NCIMB 13794 / A6)</name>
    <name type="common">Arthrobacter chlorophenolicus</name>
    <dbReference type="NCBI Taxonomy" id="452863"/>
    <lineage>
        <taxon>Bacteria</taxon>
        <taxon>Bacillati</taxon>
        <taxon>Actinomycetota</taxon>
        <taxon>Actinomycetes</taxon>
        <taxon>Micrococcales</taxon>
        <taxon>Micrococcaceae</taxon>
        <taxon>Pseudarthrobacter</taxon>
    </lineage>
</organism>
<reference key="1">
    <citation type="submission" date="2009-01" db="EMBL/GenBank/DDBJ databases">
        <title>Complete sequence of chromosome of Arthrobacter chlorophenolicus A6.</title>
        <authorList>
            <consortium name="US DOE Joint Genome Institute"/>
            <person name="Lucas S."/>
            <person name="Copeland A."/>
            <person name="Lapidus A."/>
            <person name="Glavina del Rio T."/>
            <person name="Tice H."/>
            <person name="Bruce D."/>
            <person name="Goodwin L."/>
            <person name="Pitluck S."/>
            <person name="Goltsman E."/>
            <person name="Clum A."/>
            <person name="Larimer F."/>
            <person name="Land M."/>
            <person name="Hauser L."/>
            <person name="Kyrpides N."/>
            <person name="Mikhailova N."/>
            <person name="Jansson J."/>
            <person name="Richardson P."/>
        </authorList>
    </citation>
    <scope>NUCLEOTIDE SEQUENCE [LARGE SCALE GENOMIC DNA]</scope>
    <source>
        <strain>ATCC 700700 / DSM 12829 / CIP 107037 / JCM 12360 / KCTC 9906 / NCIMB 13794 / A6</strain>
    </source>
</reference>
<proteinExistence type="inferred from homology"/>
<sequence length="402" mass="43794">MYLEHLSLTDFRSYAQVDLVLSPGVTVLVGYNGIGKTNLMEAIGYLATLSSHRVSSDGPLLRFGTERALVRARLVRNGQTTVLELEINAGRANRGRINRSNPVRARDLLGICQTVLFAPEDLALVKGDPSNRRRFLDELLASLVPHHAATRSDYDRVLKQRNALLKSARAGRVTAAHEATLDVWDQHMAKAGAELLHARLELVELLRPHLARAYAELTDASKPADAIYRSTLQNQMDDDGASLGATGRPGPGDAAAAEDLRGLSIEELTQRYVRAFGESRKKELERGISLVGPHRDDLELVLGQAPAKGYASHGETWSMCLSLRLASYYVMLDDARTGGSAPILILDDVFAELDVQRRRKLAAIVSGAEQVLVTAAVDADIPEELSGRRVKVVPGGIDEQGE</sequence>
<dbReference type="EMBL" id="CP001341">
    <property type="protein sequence ID" value="ACL38007.1"/>
    <property type="molecule type" value="Genomic_DNA"/>
</dbReference>
<dbReference type="RefSeq" id="WP_012630743.1">
    <property type="nucleotide sequence ID" value="NC_011886.1"/>
</dbReference>
<dbReference type="SMR" id="B8H7D1"/>
<dbReference type="STRING" id="452863.Achl_0004"/>
<dbReference type="KEGG" id="ach:Achl_0004"/>
<dbReference type="eggNOG" id="COG1195">
    <property type="taxonomic scope" value="Bacteria"/>
</dbReference>
<dbReference type="HOGENOM" id="CLU_040267_1_1_11"/>
<dbReference type="OrthoDB" id="9803889at2"/>
<dbReference type="Proteomes" id="UP000002505">
    <property type="component" value="Chromosome"/>
</dbReference>
<dbReference type="GO" id="GO:0005737">
    <property type="term" value="C:cytoplasm"/>
    <property type="evidence" value="ECO:0007669"/>
    <property type="project" value="UniProtKB-SubCell"/>
</dbReference>
<dbReference type="GO" id="GO:0005524">
    <property type="term" value="F:ATP binding"/>
    <property type="evidence" value="ECO:0007669"/>
    <property type="project" value="UniProtKB-UniRule"/>
</dbReference>
<dbReference type="GO" id="GO:0016887">
    <property type="term" value="F:ATP hydrolysis activity"/>
    <property type="evidence" value="ECO:0007669"/>
    <property type="project" value="InterPro"/>
</dbReference>
<dbReference type="GO" id="GO:0003697">
    <property type="term" value="F:single-stranded DNA binding"/>
    <property type="evidence" value="ECO:0007669"/>
    <property type="project" value="UniProtKB-UniRule"/>
</dbReference>
<dbReference type="GO" id="GO:0006260">
    <property type="term" value="P:DNA replication"/>
    <property type="evidence" value="ECO:0007669"/>
    <property type="project" value="UniProtKB-UniRule"/>
</dbReference>
<dbReference type="GO" id="GO:0000731">
    <property type="term" value="P:DNA synthesis involved in DNA repair"/>
    <property type="evidence" value="ECO:0007669"/>
    <property type="project" value="TreeGrafter"/>
</dbReference>
<dbReference type="GO" id="GO:0006302">
    <property type="term" value="P:double-strand break repair"/>
    <property type="evidence" value="ECO:0007669"/>
    <property type="project" value="TreeGrafter"/>
</dbReference>
<dbReference type="GO" id="GO:0009432">
    <property type="term" value="P:SOS response"/>
    <property type="evidence" value="ECO:0007669"/>
    <property type="project" value="UniProtKB-UniRule"/>
</dbReference>
<dbReference type="Gene3D" id="3.40.50.300">
    <property type="entry name" value="P-loop containing nucleotide triphosphate hydrolases"/>
    <property type="match status" value="1"/>
</dbReference>
<dbReference type="Gene3D" id="1.20.1050.90">
    <property type="entry name" value="RecF/RecN/SMC, N-terminal domain"/>
    <property type="match status" value="1"/>
</dbReference>
<dbReference type="HAMAP" id="MF_00365">
    <property type="entry name" value="RecF"/>
    <property type="match status" value="1"/>
</dbReference>
<dbReference type="InterPro" id="IPR003593">
    <property type="entry name" value="AAA+_ATPase"/>
</dbReference>
<dbReference type="InterPro" id="IPR001238">
    <property type="entry name" value="DNA-binding_RecF"/>
</dbReference>
<dbReference type="InterPro" id="IPR018078">
    <property type="entry name" value="DNA-binding_RecF_CS"/>
</dbReference>
<dbReference type="InterPro" id="IPR027417">
    <property type="entry name" value="P-loop_NTPase"/>
</dbReference>
<dbReference type="InterPro" id="IPR003395">
    <property type="entry name" value="RecF/RecN/SMC_N"/>
</dbReference>
<dbReference type="InterPro" id="IPR042174">
    <property type="entry name" value="RecF_2"/>
</dbReference>
<dbReference type="NCBIfam" id="TIGR00611">
    <property type="entry name" value="recf"/>
    <property type="match status" value="1"/>
</dbReference>
<dbReference type="PANTHER" id="PTHR32182">
    <property type="entry name" value="DNA REPLICATION AND REPAIR PROTEIN RECF"/>
    <property type="match status" value="1"/>
</dbReference>
<dbReference type="PANTHER" id="PTHR32182:SF0">
    <property type="entry name" value="DNA REPLICATION AND REPAIR PROTEIN RECF"/>
    <property type="match status" value="1"/>
</dbReference>
<dbReference type="Pfam" id="PF02463">
    <property type="entry name" value="SMC_N"/>
    <property type="match status" value="1"/>
</dbReference>
<dbReference type="SMART" id="SM00382">
    <property type="entry name" value="AAA"/>
    <property type="match status" value="1"/>
</dbReference>
<dbReference type="SUPFAM" id="SSF52540">
    <property type="entry name" value="P-loop containing nucleoside triphosphate hydrolases"/>
    <property type="match status" value="1"/>
</dbReference>
<dbReference type="PROSITE" id="PS00617">
    <property type="entry name" value="RECF_1"/>
    <property type="match status" value="1"/>
</dbReference>
<dbReference type="PROSITE" id="PS00618">
    <property type="entry name" value="RECF_2"/>
    <property type="match status" value="1"/>
</dbReference>
<protein>
    <recommendedName>
        <fullName evidence="1">DNA replication and repair protein RecF</fullName>
    </recommendedName>
</protein>
<evidence type="ECO:0000255" key="1">
    <source>
        <dbReference type="HAMAP-Rule" id="MF_00365"/>
    </source>
</evidence>
<accession>B8H7D1</accession>
<keyword id="KW-0067">ATP-binding</keyword>
<keyword id="KW-0963">Cytoplasm</keyword>
<keyword id="KW-0227">DNA damage</keyword>
<keyword id="KW-0234">DNA repair</keyword>
<keyword id="KW-0235">DNA replication</keyword>
<keyword id="KW-0238">DNA-binding</keyword>
<keyword id="KW-0547">Nucleotide-binding</keyword>
<keyword id="KW-0742">SOS response</keyword>
<comment type="function">
    <text evidence="1">The RecF protein is involved in DNA metabolism; it is required for DNA replication and normal SOS inducibility. RecF binds preferentially to single-stranded, linear DNA. It also seems to bind ATP.</text>
</comment>
<comment type="subcellular location">
    <subcellularLocation>
        <location evidence="1">Cytoplasm</location>
    </subcellularLocation>
</comment>
<comment type="similarity">
    <text evidence="1">Belongs to the RecF family.</text>
</comment>
<feature type="chain" id="PRO_1000193341" description="DNA replication and repair protein RecF">
    <location>
        <begin position="1"/>
        <end position="402"/>
    </location>
</feature>
<feature type="binding site" evidence="1">
    <location>
        <begin position="30"/>
        <end position="37"/>
    </location>
    <ligand>
        <name>ATP</name>
        <dbReference type="ChEBI" id="CHEBI:30616"/>
    </ligand>
</feature>
<gene>
    <name evidence="1" type="primary">recF</name>
    <name type="ordered locus">Achl_0004</name>
</gene>
<name>RECF_PSECP</name>